<comment type="function">
    <text evidence="1">Exhibits GTPase activity. Binds RNA but is probably not involved in ribosome assembly in mycobacteria.</text>
</comment>
<comment type="subunit">
    <text evidence="1">Monomer.</text>
</comment>
<comment type="subcellular location">
    <subcellularLocation>
        <location evidence="1">Cell envelope</location>
    </subcellularLocation>
    <subcellularLocation>
        <location evidence="1">Secreted</location>
        <location evidence="1">Cell wall</location>
    </subcellularLocation>
</comment>
<comment type="similarity">
    <text evidence="1">Belongs to the TRAFAC class TrmE-Era-EngA-EngB-Septin-like GTPase superfamily. Era GTPase family.</text>
</comment>
<sequence>MTEFHSGFVCLVGRPNTGKSTLTNALVGAKVAITSTRPQTTRHAIRGIVHSDDFQIILVDTPGLHRPRTLLGKRLNDLVRETYAAVDVIGLCIPADEAIGPGDRWIVEQLRSTGPANTTLVVIVTKIDKVPKEKVVAQLVAVSELVTNAAEIVPVSAMTGDRVDLLIDVLAAALPAGPAYYPDGELTDEPEEVLMAELIREAALQGVRDELPHSLAVVIDEVSPREGRDDLIDVHAALYVERDSQKGIVIGKGGARLREVGTAARSQIENLLGTKVYLDLRVKVAKNWQRDPKQLGRLGF</sequence>
<protein>
    <recommendedName>
        <fullName evidence="1">GTPase Era</fullName>
    </recommendedName>
</protein>
<dbReference type="EMBL" id="AP010918">
    <property type="protein sequence ID" value="BAH26656.1"/>
    <property type="molecule type" value="Genomic_DNA"/>
</dbReference>
<dbReference type="RefSeq" id="WP_003412224.1">
    <property type="nucleotide sequence ID" value="NZ_CP014566.1"/>
</dbReference>
<dbReference type="SMR" id="C1AQS7"/>
<dbReference type="GeneID" id="45426351"/>
<dbReference type="KEGG" id="mbt:JTY_2372"/>
<dbReference type="HOGENOM" id="CLU_038009_0_2_11"/>
<dbReference type="GO" id="GO:0030313">
    <property type="term" value="C:cell envelope"/>
    <property type="evidence" value="ECO:0007669"/>
    <property type="project" value="UniProtKB-SubCell"/>
</dbReference>
<dbReference type="GO" id="GO:0005829">
    <property type="term" value="C:cytosol"/>
    <property type="evidence" value="ECO:0007669"/>
    <property type="project" value="TreeGrafter"/>
</dbReference>
<dbReference type="GO" id="GO:0005576">
    <property type="term" value="C:extracellular region"/>
    <property type="evidence" value="ECO:0007669"/>
    <property type="project" value="UniProtKB-KW"/>
</dbReference>
<dbReference type="GO" id="GO:0005525">
    <property type="term" value="F:GTP binding"/>
    <property type="evidence" value="ECO:0007669"/>
    <property type="project" value="UniProtKB-UniRule"/>
</dbReference>
<dbReference type="GO" id="GO:0003924">
    <property type="term" value="F:GTPase activity"/>
    <property type="evidence" value="ECO:0007669"/>
    <property type="project" value="UniProtKB-UniRule"/>
</dbReference>
<dbReference type="GO" id="GO:0043024">
    <property type="term" value="F:ribosomal small subunit binding"/>
    <property type="evidence" value="ECO:0007669"/>
    <property type="project" value="TreeGrafter"/>
</dbReference>
<dbReference type="GO" id="GO:0019843">
    <property type="term" value="F:rRNA binding"/>
    <property type="evidence" value="ECO:0007669"/>
    <property type="project" value="TreeGrafter"/>
</dbReference>
<dbReference type="GO" id="GO:0000028">
    <property type="term" value="P:ribosomal small subunit assembly"/>
    <property type="evidence" value="ECO:0007669"/>
    <property type="project" value="TreeGrafter"/>
</dbReference>
<dbReference type="CDD" id="cd04163">
    <property type="entry name" value="Era"/>
    <property type="match status" value="1"/>
</dbReference>
<dbReference type="CDD" id="cd22534">
    <property type="entry name" value="KH-II_Era"/>
    <property type="match status" value="1"/>
</dbReference>
<dbReference type="FunFam" id="3.30.300.20:FF:000003">
    <property type="entry name" value="GTPase Era"/>
    <property type="match status" value="1"/>
</dbReference>
<dbReference type="FunFam" id="3.40.50.300:FF:000094">
    <property type="entry name" value="GTPase Era"/>
    <property type="match status" value="1"/>
</dbReference>
<dbReference type="Gene3D" id="3.30.300.20">
    <property type="match status" value="1"/>
</dbReference>
<dbReference type="Gene3D" id="3.40.50.300">
    <property type="entry name" value="P-loop containing nucleotide triphosphate hydrolases"/>
    <property type="match status" value="1"/>
</dbReference>
<dbReference type="HAMAP" id="MF_00367">
    <property type="entry name" value="GTPase_Era"/>
    <property type="match status" value="1"/>
</dbReference>
<dbReference type="InterPro" id="IPR030388">
    <property type="entry name" value="G_ERA_dom"/>
</dbReference>
<dbReference type="InterPro" id="IPR006073">
    <property type="entry name" value="GTP-bd"/>
</dbReference>
<dbReference type="InterPro" id="IPR005662">
    <property type="entry name" value="GTPase_Era-like"/>
</dbReference>
<dbReference type="InterPro" id="IPR015946">
    <property type="entry name" value="KH_dom-like_a/b"/>
</dbReference>
<dbReference type="InterPro" id="IPR004044">
    <property type="entry name" value="KH_dom_type_2"/>
</dbReference>
<dbReference type="InterPro" id="IPR009019">
    <property type="entry name" value="KH_sf_prok-type"/>
</dbReference>
<dbReference type="InterPro" id="IPR027417">
    <property type="entry name" value="P-loop_NTPase"/>
</dbReference>
<dbReference type="InterPro" id="IPR005225">
    <property type="entry name" value="Small_GTP-bd"/>
</dbReference>
<dbReference type="NCBIfam" id="TIGR00436">
    <property type="entry name" value="era"/>
    <property type="match status" value="1"/>
</dbReference>
<dbReference type="NCBIfam" id="NF000908">
    <property type="entry name" value="PRK00089.1"/>
    <property type="match status" value="1"/>
</dbReference>
<dbReference type="NCBIfam" id="TIGR00231">
    <property type="entry name" value="small_GTP"/>
    <property type="match status" value="1"/>
</dbReference>
<dbReference type="PANTHER" id="PTHR42698">
    <property type="entry name" value="GTPASE ERA"/>
    <property type="match status" value="1"/>
</dbReference>
<dbReference type="PANTHER" id="PTHR42698:SF1">
    <property type="entry name" value="GTPASE ERA, MITOCHONDRIAL"/>
    <property type="match status" value="1"/>
</dbReference>
<dbReference type="Pfam" id="PF07650">
    <property type="entry name" value="KH_2"/>
    <property type="match status" value="1"/>
</dbReference>
<dbReference type="Pfam" id="PF01926">
    <property type="entry name" value="MMR_HSR1"/>
    <property type="match status" value="1"/>
</dbReference>
<dbReference type="PRINTS" id="PR00326">
    <property type="entry name" value="GTP1OBG"/>
</dbReference>
<dbReference type="SUPFAM" id="SSF52540">
    <property type="entry name" value="P-loop containing nucleoside triphosphate hydrolases"/>
    <property type="match status" value="1"/>
</dbReference>
<dbReference type="SUPFAM" id="SSF54814">
    <property type="entry name" value="Prokaryotic type KH domain (KH-domain type II)"/>
    <property type="match status" value="1"/>
</dbReference>
<dbReference type="PROSITE" id="PS51713">
    <property type="entry name" value="G_ERA"/>
    <property type="match status" value="1"/>
</dbReference>
<dbReference type="PROSITE" id="PS50823">
    <property type="entry name" value="KH_TYPE_2"/>
    <property type="match status" value="1"/>
</dbReference>
<gene>
    <name evidence="1" type="primary">era</name>
    <name type="ordered locus">JTY_2372</name>
</gene>
<reference key="1">
    <citation type="journal article" date="2009" name="Vaccine">
        <title>Whole genome sequence analysis of Mycobacterium bovis bacillus Calmette-Guerin (BCG) Tokyo 172: a comparative study of BCG vaccine substrains.</title>
        <authorList>
            <person name="Seki M."/>
            <person name="Honda I."/>
            <person name="Fujita I."/>
            <person name="Yano I."/>
            <person name="Yamamoto S."/>
            <person name="Koyama A."/>
        </authorList>
    </citation>
    <scope>NUCLEOTIDE SEQUENCE [LARGE SCALE GENOMIC DNA]</scope>
    <source>
        <strain>BCG / Tokyo 172 / ATCC 35737 / TMC 1019</strain>
    </source>
</reference>
<feature type="chain" id="PRO_1000189968" description="GTPase Era">
    <location>
        <begin position="1"/>
        <end position="300"/>
    </location>
</feature>
<feature type="domain" description="Era-type G" evidence="2">
    <location>
        <begin position="5"/>
        <end position="176"/>
    </location>
</feature>
<feature type="domain" description="KH type-2" evidence="1">
    <location>
        <begin position="207"/>
        <end position="286"/>
    </location>
</feature>
<feature type="region of interest" description="G1" evidence="2">
    <location>
        <begin position="13"/>
        <end position="20"/>
    </location>
</feature>
<feature type="region of interest" description="G2" evidence="2">
    <location>
        <begin position="39"/>
        <end position="43"/>
    </location>
</feature>
<feature type="region of interest" description="G3" evidence="2">
    <location>
        <begin position="60"/>
        <end position="63"/>
    </location>
</feature>
<feature type="region of interest" description="G4" evidence="2">
    <location>
        <begin position="125"/>
        <end position="128"/>
    </location>
</feature>
<feature type="region of interest" description="G5" evidence="2">
    <location>
        <begin position="155"/>
        <end position="157"/>
    </location>
</feature>
<feature type="binding site" evidence="1">
    <location>
        <begin position="13"/>
        <end position="20"/>
    </location>
    <ligand>
        <name>GTP</name>
        <dbReference type="ChEBI" id="CHEBI:37565"/>
    </ligand>
</feature>
<feature type="binding site" evidence="1">
    <location>
        <begin position="60"/>
        <end position="64"/>
    </location>
    <ligand>
        <name>GTP</name>
        <dbReference type="ChEBI" id="CHEBI:37565"/>
    </ligand>
</feature>
<feature type="binding site" evidence="1">
    <location>
        <begin position="125"/>
        <end position="128"/>
    </location>
    <ligand>
        <name>GTP</name>
        <dbReference type="ChEBI" id="CHEBI:37565"/>
    </ligand>
</feature>
<name>ERA_MYCBT</name>
<proteinExistence type="inferred from homology"/>
<accession>C1AQS7</accession>
<evidence type="ECO:0000255" key="1">
    <source>
        <dbReference type="HAMAP-Rule" id="MF_00367"/>
    </source>
</evidence>
<evidence type="ECO:0000255" key="2">
    <source>
        <dbReference type="PROSITE-ProRule" id="PRU01050"/>
    </source>
</evidence>
<organism>
    <name type="scientific">Mycobacterium bovis (strain BCG / Tokyo 172 / ATCC 35737 / TMC 1019)</name>
    <dbReference type="NCBI Taxonomy" id="561275"/>
    <lineage>
        <taxon>Bacteria</taxon>
        <taxon>Bacillati</taxon>
        <taxon>Actinomycetota</taxon>
        <taxon>Actinomycetes</taxon>
        <taxon>Mycobacteriales</taxon>
        <taxon>Mycobacteriaceae</taxon>
        <taxon>Mycobacterium</taxon>
        <taxon>Mycobacterium tuberculosis complex</taxon>
    </lineage>
</organism>
<keyword id="KW-0134">Cell wall</keyword>
<keyword id="KW-0342">GTP-binding</keyword>
<keyword id="KW-0547">Nucleotide-binding</keyword>
<keyword id="KW-0694">RNA-binding</keyword>
<keyword id="KW-0964">Secreted</keyword>